<dbReference type="EC" id="2.4.2.18" evidence="1"/>
<dbReference type="EMBL" id="AP009351">
    <property type="protein sequence ID" value="BAF67553.1"/>
    <property type="molecule type" value="Genomic_DNA"/>
</dbReference>
<dbReference type="RefSeq" id="WP_000173832.1">
    <property type="nucleotide sequence ID" value="NZ_JBBIAE010000001.1"/>
</dbReference>
<dbReference type="SMR" id="A6QGS1"/>
<dbReference type="KEGG" id="sae:NWMN_1281"/>
<dbReference type="HOGENOM" id="CLU_034315_3_0_9"/>
<dbReference type="UniPathway" id="UPA00035">
    <property type="reaction ID" value="UER00041"/>
</dbReference>
<dbReference type="Proteomes" id="UP000006386">
    <property type="component" value="Chromosome"/>
</dbReference>
<dbReference type="GO" id="GO:0005829">
    <property type="term" value="C:cytosol"/>
    <property type="evidence" value="ECO:0007669"/>
    <property type="project" value="TreeGrafter"/>
</dbReference>
<dbReference type="GO" id="GO:0004048">
    <property type="term" value="F:anthranilate phosphoribosyltransferase activity"/>
    <property type="evidence" value="ECO:0007669"/>
    <property type="project" value="UniProtKB-UniRule"/>
</dbReference>
<dbReference type="GO" id="GO:0000287">
    <property type="term" value="F:magnesium ion binding"/>
    <property type="evidence" value="ECO:0007669"/>
    <property type="project" value="UniProtKB-UniRule"/>
</dbReference>
<dbReference type="GO" id="GO:0000162">
    <property type="term" value="P:L-tryptophan biosynthetic process"/>
    <property type="evidence" value="ECO:0007669"/>
    <property type="project" value="UniProtKB-UniRule"/>
</dbReference>
<dbReference type="FunFam" id="3.40.1030.10:FF:000009">
    <property type="entry name" value="Anthranilate phosphoribosyltransferase"/>
    <property type="match status" value="1"/>
</dbReference>
<dbReference type="Gene3D" id="3.40.1030.10">
    <property type="entry name" value="Nucleoside phosphorylase/phosphoribosyltransferase catalytic domain"/>
    <property type="match status" value="1"/>
</dbReference>
<dbReference type="HAMAP" id="MF_00211">
    <property type="entry name" value="TrpD"/>
    <property type="match status" value="1"/>
</dbReference>
<dbReference type="InterPro" id="IPR005940">
    <property type="entry name" value="Anthranilate_Pribosyl_Tfrase"/>
</dbReference>
<dbReference type="InterPro" id="IPR000312">
    <property type="entry name" value="Glycosyl_Trfase_fam3"/>
</dbReference>
<dbReference type="InterPro" id="IPR035902">
    <property type="entry name" value="Nuc_phospho_transferase"/>
</dbReference>
<dbReference type="NCBIfam" id="TIGR01245">
    <property type="entry name" value="trpD"/>
    <property type="match status" value="1"/>
</dbReference>
<dbReference type="PANTHER" id="PTHR43285">
    <property type="entry name" value="ANTHRANILATE PHOSPHORIBOSYLTRANSFERASE"/>
    <property type="match status" value="1"/>
</dbReference>
<dbReference type="PANTHER" id="PTHR43285:SF2">
    <property type="entry name" value="ANTHRANILATE PHOSPHORIBOSYLTRANSFERASE"/>
    <property type="match status" value="1"/>
</dbReference>
<dbReference type="Pfam" id="PF00591">
    <property type="entry name" value="Glycos_transf_3"/>
    <property type="match status" value="1"/>
</dbReference>
<dbReference type="SUPFAM" id="SSF52418">
    <property type="entry name" value="Nucleoside phosphorylase/phosphoribosyltransferase catalytic domain"/>
    <property type="match status" value="1"/>
</dbReference>
<proteinExistence type="inferred from homology"/>
<protein>
    <recommendedName>
        <fullName evidence="1">Anthranilate phosphoribosyltransferase</fullName>
        <ecNumber evidence="1">2.4.2.18</ecNumber>
    </recommendedName>
</protein>
<gene>
    <name evidence="1" type="primary">trpD</name>
    <name type="ordered locus">NWMN_1281</name>
</gene>
<keyword id="KW-0028">Amino-acid biosynthesis</keyword>
<keyword id="KW-0057">Aromatic amino acid biosynthesis</keyword>
<keyword id="KW-0328">Glycosyltransferase</keyword>
<keyword id="KW-0460">Magnesium</keyword>
<keyword id="KW-0479">Metal-binding</keyword>
<keyword id="KW-0808">Transferase</keyword>
<keyword id="KW-0822">Tryptophan biosynthesis</keyword>
<comment type="function">
    <text evidence="1">Catalyzes the transfer of the phosphoribosyl group of 5-phosphorylribose-1-pyrophosphate (PRPP) to anthranilate to yield N-(5'-phosphoribosyl)-anthranilate (PRA).</text>
</comment>
<comment type="catalytic activity">
    <reaction evidence="1">
        <text>N-(5-phospho-beta-D-ribosyl)anthranilate + diphosphate = 5-phospho-alpha-D-ribose 1-diphosphate + anthranilate</text>
        <dbReference type="Rhea" id="RHEA:11768"/>
        <dbReference type="ChEBI" id="CHEBI:16567"/>
        <dbReference type="ChEBI" id="CHEBI:18277"/>
        <dbReference type="ChEBI" id="CHEBI:33019"/>
        <dbReference type="ChEBI" id="CHEBI:58017"/>
        <dbReference type="EC" id="2.4.2.18"/>
    </reaction>
</comment>
<comment type="cofactor">
    <cofactor evidence="1">
        <name>Mg(2+)</name>
        <dbReference type="ChEBI" id="CHEBI:18420"/>
    </cofactor>
    <text evidence="1">Binds 2 magnesium ions per monomer.</text>
</comment>
<comment type="pathway">
    <text evidence="1">Amino-acid biosynthesis; L-tryptophan biosynthesis; L-tryptophan from chorismate: step 2/5.</text>
</comment>
<comment type="subunit">
    <text evidence="1">Homodimer.</text>
</comment>
<comment type="similarity">
    <text evidence="1">Belongs to the anthranilate phosphoribosyltransferase family.</text>
</comment>
<evidence type="ECO:0000255" key="1">
    <source>
        <dbReference type="HAMAP-Rule" id="MF_00211"/>
    </source>
</evidence>
<sequence>MTLLTRIKTETILLESDIKELIDILISPSIGTDIKYELLSSYSEREIQQQELTYIVRSLINTMYPHQPCYEGAMCVCGTGGDKSNSFNISTTVAFVVASAGVKVIKHGNKSITSNSGSTDLLNQMNIQTTTVDDTPNQLNEKDLVFIGATESYPIMKYMQPVRKMIGKPTILNLVGPLINPYHLTYQMVGVFDPTKLKLVAKTIKDLGRKRAIVLHGANGMDEATLSGDNLIYELTEDGEIKNYTLNATDYGLKHAPNSDFKGGSPEENLAISLNILNGKDQSSRRDVVLLNAGLSLYVAEKVDTIAEGIELATTLIDNGEALEKYHQMRGE</sequence>
<organism>
    <name type="scientific">Staphylococcus aureus (strain Newman)</name>
    <dbReference type="NCBI Taxonomy" id="426430"/>
    <lineage>
        <taxon>Bacteria</taxon>
        <taxon>Bacillati</taxon>
        <taxon>Bacillota</taxon>
        <taxon>Bacilli</taxon>
        <taxon>Bacillales</taxon>
        <taxon>Staphylococcaceae</taxon>
        <taxon>Staphylococcus</taxon>
    </lineage>
</organism>
<feature type="chain" id="PRO_1000099845" description="Anthranilate phosphoribosyltransferase">
    <location>
        <begin position="1"/>
        <end position="332"/>
    </location>
</feature>
<feature type="binding site" evidence="1">
    <location>
        <position position="78"/>
    </location>
    <ligand>
        <name>5-phospho-alpha-D-ribose 1-diphosphate</name>
        <dbReference type="ChEBI" id="CHEBI:58017"/>
    </ligand>
</feature>
<feature type="binding site" evidence="1">
    <location>
        <position position="78"/>
    </location>
    <ligand>
        <name>anthranilate</name>
        <dbReference type="ChEBI" id="CHEBI:16567"/>
        <label>1</label>
    </ligand>
</feature>
<feature type="binding site" evidence="1">
    <location>
        <begin position="81"/>
        <end position="82"/>
    </location>
    <ligand>
        <name>5-phospho-alpha-D-ribose 1-diphosphate</name>
        <dbReference type="ChEBI" id="CHEBI:58017"/>
    </ligand>
</feature>
<feature type="binding site" evidence="1">
    <location>
        <position position="86"/>
    </location>
    <ligand>
        <name>5-phospho-alpha-D-ribose 1-diphosphate</name>
        <dbReference type="ChEBI" id="CHEBI:58017"/>
    </ligand>
</feature>
<feature type="binding site" evidence="1">
    <location>
        <begin position="88"/>
        <end position="91"/>
    </location>
    <ligand>
        <name>5-phospho-alpha-D-ribose 1-diphosphate</name>
        <dbReference type="ChEBI" id="CHEBI:58017"/>
    </ligand>
</feature>
<feature type="binding site" evidence="1">
    <location>
        <position position="90"/>
    </location>
    <ligand>
        <name>Mg(2+)</name>
        <dbReference type="ChEBI" id="CHEBI:18420"/>
        <label>1</label>
    </ligand>
</feature>
<feature type="binding site" evidence="1">
    <location>
        <begin position="106"/>
        <end position="114"/>
    </location>
    <ligand>
        <name>5-phospho-alpha-D-ribose 1-diphosphate</name>
        <dbReference type="ChEBI" id="CHEBI:58017"/>
    </ligand>
</feature>
<feature type="binding site" evidence="1">
    <location>
        <position position="109"/>
    </location>
    <ligand>
        <name>anthranilate</name>
        <dbReference type="ChEBI" id="CHEBI:16567"/>
        <label>1</label>
    </ligand>
</feature>
<feature type="binding site" evidence="1">
    <location>
        <position position="118"/>
    </location>
    <ligand>
        <name>5-phospho-alpha-D-ribose 1-diphosphate</name>
        <dbReference type="ChEBI" id="CHEBI:58017"/>
    </ligand>
</feature>
<feature type="binding site" evidence="1">
    <location>
        <position position="163"/>
    </location>
    <ligand>
        <name>anthranilate</name>
        <dbReference type="ChEBI" id="CHEBI:16567"/>
        <label>2</label>
    </ligand>
</feature>
<feature type="binding site" evidence="1">
    <location>
        <position position="222"/>
    </location>
    <ligand>
        <name>Mg(2+)</name>
        <dbReference type="ChEBI" id="CHEBI:18420"/>
        <label>2</label>
    </ligand>
</feature>
<feature type="binding site" evidence="1">
    <location>
        <position position="223"/>
    </location>
    <ligand>
        <name>Mg(2+)</name>
        <dbReference type="ChEBI" id="CHEBI:18420"/>
        <label>1</label>
    </ligand>
</feature>
<feature type="binding site" evidence="1">
    <location>
        <position position="223"/>
    </location>
    <ligand>
        <name>Mg(2+)</name>
        <dbReference type="ChEBI" id="CHEBI:18420"/>
        <label>2</label>
    </ligand>
</feature>
<name>TRPD_STAAE</name>
<reference key="1">
    <citation type="journal article" date="2008" name="J. Bacteriol.">
        <title>Genome sequence of Staphylococcus aureus strain Newman and comparative analysis of staphylococcal genomes: polymorphism and evolution of two major pathogenicity islands.</title>
        <authorList>
            <person name="Baba T."/>
            <person name="Bae T."/>
            <person name="Schneewind O."/>
            <person name="Takeuchi F."/>
            <person name="Hiramatsu K."/>
        </authorList>
    </citation>
    <scope>NUCLEOTIDE SEQUENCE [LARGE SCALE GENOMIC DNA]</scope>
    <source>
        <strain>Newman</strain>
    </source>
</reference>
<accession>A6QGS1</accession>